<feature type="peptide" id="PRO_0000421200" description="Short cationic peptide-1a" evidence="1">
    <location>
        <begin position="1"/>
        <end position="28"/>
    </location>
</feature>
<feature type="modified residue" description="Glutamic acid 1-amide" evidence="1">
    <location>
        <position position="28"/>
    </location>
</feature>
<name>TXS1A_CUPSA</name>
<dbReference type="BMRB" id="B3EWU1"/>
<dbReference type="GO" id="GO:0005576">
    <property type="term" value="C:extracellular region"/>
    <property type="evidence" value="ECO:0007669"/>
    <property type="project" value="UniProtKB-SubCell"/>
</dbReference>
<dbReference type="GO" id="GO:0090729">
    <property type="term" value="F:toxin activity"/>
    <property type="evidence" value="ECO:0007669"/>
    <property type="project" value="UniProtKB-KW"/>
</dbReference>
<dbReference type="GO" id="GO:0042742">
    <property type="term" value="P:defense response to bacterium"/>
    <property type="evidence" value="ECO:0007669"/>
    <property type="project" value="InterPro"/>
</dbReference>
<dbReference type="InterPro" id="IPR035164">
    <property type="entry name" value="Cupiennin"/>
</dbReference>
<dbReference type="Pfam" id="PF17563">
    <property type="entry name" value="Cu"/>
    <property type="match status" value="1"/>
</dbReference>
<evidence type="ECO:0000269" key="1">
    <source>
    </source>
</evidence>
<evidence type="ECO:0000303" key="2">
    <source>
    </source>
</evidence>
<evidence type="ECO:0000305" key="3"/>
<evidence type="ECO:0000305" key="4">
    <source>
    </source>
</evidence>
<reference key="1">
    <citation type="journal article" date="2012" name="FEBS J.">
        <title>Multicomponent venom of the spider Cupiennius salei: a bioanalytical investigation applying different strategies.</title>
        <authorList>
            <person name="Trachsel C."/>
            <person name="Siegemund D."/>
            <person name="Kampfer U."/>
            <person name="Kopp L.S."/>
            <person name="Buhr C."/>
            <person name="Grossmann J."/>
            <person name="Luthi C."/>
            <person name="Cunningham M."/>
            <person name="Nentwig W."/>
            <person name="Kuhn-Nentwig L."/>
            <person name="Schurch S."/>
            <person name="Schaller J."/>
        </authorList>
    </citation>
    <scope>PROTEIN SEQUENCE</scope>
    <scope>MASS SPECTROMETRY</scope>
    <scope>AMIDATION AT GLU-28</scope>
    <source>
        <tissue>Venom</tissue>
    </source>
</reference>
<protein>
    <recommendedName>
        <fullName evidence="2">Short cationic peptide-1a</fullName>
        <shortName evidence="2">SCP-1a</shortName>
    </recommendedName>
    <alternativeName>
        <fullName evidence="2">Cupiennin 1-like peptide-1a</fullName>
    </alternativeName>
    <alternativeName>
        <fullName evidence="3">Truncated variant of Cupiennin 1 family</fullName>
    </alternativeName>
</protein>
<sequence length="28" mass="3079">FLAKKVAKTVAKQAAKQGAKYVVNKQME</sequence>
<accession>B3EWU1</accession>
<keyword id="KW-0027">Amidation</keyword>
<keyword id="KW-0903">Direct protein sequencing</keyword>
<keyword id="KW-0964">Secreted</keyword>
<keyword id="KW-0800">Toxin</keyword>
<organism>
    <name type="scientific">Cupiennius salei</name>
    <name type="common">American wandering spider</name>
    <dbReference type="NCBI Taxonomy" id="6928"/>
    <lineage>
        <taxon>Eukaryota</taxon>
        <taxon>Metazoa</taxon>
        <taxon>Ecdysozoa</taxon>
        <taxon>Arthropoda</taxon>
        <taxon>Chelicerata</taxon>
        <taxon>Arachnida</taxon>
        <taxon>Araneae</taxon>
        <taxon>Araneomorphae</taxon>
        <taxon>Entelegynae</taxon>
        <taxon>Lycosoidea</taxon>
        <taxon>Ctenidae</taxon>
        <taxon>Cupiennius</taxon>
    </lineage>
</organism>
<proteinExistence type="evidence at protein level"/>
<comment type="subcellular location">
    <subcellularLocation>
        <location evidence="1">Secreted</location>
    </subcellularLocation>
</comment>
<comment type="tissue specificity">
    <text evidence="4">Expressed by the venom gland.</text>
</comment>
<comment type="mass spectrometry" mass="3075.779" method="Electrospray" evidence="1"/>
<comment type="similarity">
    <text evidence="3">Belongs to the cationic peptide 04 (cupiennin) family. 01 subfamily.</text>
</comment>